<reference key="1">
    <citation type="journal article" date="2009" name="Nat. Biotechnol.">
        <title>Genome sequence of the recombinant protein production host Pichia pastoris.</title>
        <authorList>
            <person name="De Schutter K."/>
            <person name="Lin Y.-C."/>
            <person name="Tiels P."/>
            <person name="Van Hecke A."/>
            <person name="Glinka S."/>
            <person name="Weber-Lehmann J."/>
            <person name="Rouze P."/>
            <person name="Van de Peer Y."/>
            <person name="Callewaert N."/>
        </authorList>
    </citation>
    <scope>NUCLEOTIDE SEQUENCE [LARGE SCALE GENOMIC DNA]</scope>
    <source>
        <strain>GS115 / ATCC 20864</strain>
    </source>
</reference>
<reference key="2">
    <citation type="journal article" date="1993" name="J. Cell Biol.">
        <title>The pas8 mutant of Pichia pastoris exhibits the peroxisomal protein import deficiencies of Zellweger syndrome cells -- the PAS8 protein binds to the COOH-terminal tripeptide peroxisomal targeting signal, and is a member of the TPR protein family.</title>
        <authorList>
            <person name="McCollum D."/>
            <person name="Monosov E."/>
            <person name="Subramani S."/>
        </authorList>
    </citation>
    <scope>FUNCTION</scope>
    <scope>DISRUPTION PHENOTYPE</scope>
</reference>
<reference key="3">
    <citation type="submission" date="1996-07" db="EMBL/GenBank/DDBJ databases">
        <authorList>
            <person name="Gould S.J."/>
            <person name="Kalish J.E."/>
            <person name="Morrel J.C."/>
            <person name="Bjorkman J."/>
            <person name="Urquhart A.J."/>
            <person name="Crane D.I."/>
        </authorList>
    </citation>
    <scope>NUCLEOTIDE SEQUENCE [GENOMIC DNA]</scope>
</reference>
<reference key="4">
    <citation type="journal article" date="1995" name="EMBO J.">
        <title>The Pichia pastoris peroxisomal protein PAS8p is the receptor for the C-terminal tripeptide peroxisomal targeting signal.</title>
        <authorList>
            <person name="Terlecky S.R."/>
            <person name="Nuttley W.M."/>
            <person name="McCollum D."/>
            <person name="Sock E."/>
            <person name="Subramani S."/>
        </authorList>
    </citation>
    <scope>FUNCTION</scope>
    <scope>SUBCELLULAR LOCATION</scope>
    <scope>DISRUPTION PHENOTYPE</scope>
    <scope>DOMAIN</scope>
</reference>
<reference key="5">
    <citation type="journal article" date="2013" name="J. Biol. Chem.">
        <title>Redox-regulated cargo binding and release by the peroxisomal targeting signal receptor, Pex5.</title>
        <authorList>
            <person name="Ma C."/>
            <person name="Hagstrom D."/>
            <person name="Polley S.G."/>
            <person name="Subramani S."/>
        </authorList>
    </citation>
    <scope>FUNCTION</scope>
    <scope>DISULFIDE BOND</scope>
    <scope>MUTAGENESIS OF CYS-10; CYS-338 AND CYS-444</scope>
    <scope>INTERACTION WITH PEX8</scope>
    <scope>DOMAIN</scope>
</reference>
<reference key="6">
    <citation type="journal article" date="2014" name="Mol. Biol. Cell">
        <title>The unique degradation pathway of the PTS2 receptor, Pex7, is dependent on the PTS receptor/coreceptor, Pex5 and Pex20.</title>
        <authorList>
            <person name="Hagstrom D."/>
            <person name="Ma C."/>
            <person name="Guha-Polley S."/>
            <person name="Subramani S."/>
        </authorList>
    </citation>
    <scope>FUNCTION</scope>
</reference>
<proteinExistence type="evidence at protein level"/>
<dbReference type="EMBL" id="FN392320">
    <property type="protein sequence ID" value="CAY69734.1"/>
    <property type="molecule type" value="Genomic_DNA"/>
</dbReference>
<dbReference type="RefSeq" id="XP_002492014.1">
    <property type="nucleotide sequence ID" value="XM_002491969.1"/>
</dbReference>
<dbReference type="SMR" id="C4R2L0"/>
<dbReference type="FunCoup" id="C4R2L0">
    <property type="interactions" value="91"/>
</dbReference>
<dbReference type="STRING" id="644223.C4R2L0"/>
<dbReference type="EnsemblFungi" id="CAY69734">
    <property type="protein sequence ID" value="CAY69734"/>
    <property type="gene ID" value="PAS_chr2-2_0186"/>
</dbReference>
<dbReference type="GeneID" id="8198761"/>
<dbReference type="KEGG" id="ppa:PAS_chr2-2_0186"/>
<dbReference type="eggNOG" id="KOG1125">
    <property type="taxonomic scope" value="Eukaryota"/>
</dbReference>
<dbReference type="HOGENOM" id="CLU_013516_3_0_1"/>
<dbReference type="InParanoid" id="C4R2L0"/>
<dbReference type="OMA" id="WEEQFKQ"/>
<dbReference type="OrthoDB" id="10006023at2759"/>
<dbReference type="Proteomes" id="UP000000314">
    <property type="component" value="Chromosome 2"/>
</dbReference>
<dbReference type="GO" id="GO:0005829">
    <property type="term" value="C:cytosol"/>
    <property type="evidence" value="ECO:0007669"/>
    <property type="project" value="UniProtKB-SubCell"/>
</dbReference>
<dbReference type="GO" id="GO:0005782">
    <property type="term" value="C:peroxisomal matrix"/>
    <property type="evidence" value="ECO:0007669"/>
    <property type="project" value="UniProtKB-SubCell"/>
</dbReference>
<dbReference type="GO" id="GO:0005778">
    <property type="term" value="C:peroxisomal membrane"/>
    <property type="evidence" value="ECO:0007669"/>
    <property type="project" value="UniProtKB-SubCell"/>
</dbReference>
<dbReference type="GO" id="GO:0005052">
    <property type="term" value="F:peroxisome matrix targeting signal-1 binding"/>
    <property type="evidence" value="ECO:0007669"/>
    <property type="project" value="TreeGrafter"/>
</dbReference>
<dbReference type="GO" id="GO:0016560">
    <property type="term" value="P:protein import into peroxisome matrix, docking"/>
    <property type="evidence" value="ECO:0007669"/>
    <property type="project" value="TreeGrafter"/>
</dbReference>
<dbReference type="Gene3D" id="1.25.40.10">
    <property type="entry name" value="Tetratricopeptide repeat domain"/>
    <property type="match status" value="1"/>
</dbReference>
<dbReference type="InterPro" id="IPR024111">
    <property type="entry name" value="PEX5/PEX5L"/>
</dbReference>
<dbReference type="InterPro" id="IPR011990">
    <property type="entry name" value="TPR-like_helical_dom_sf"/>
</dbReference>
<dbReference type="InterPro" id="IPR019734">
    <property type="entry name" value="TPR_rpt"/>
</dbReference>
<dbReference type="PANTHER" id="PTHR10130:SF0">
    <property type="entry name" value="GH08708P"/>
    <property type="match status" value="1"/>
</dbReference>
<dbReference type="PANTHER" id="PTHR10130">
    <property type="entry name" value="PEROXISOMAL TARGETING SIGNAL 1 RECEPTOR PEX5"/>
    <property type="match status" value="1"/>
</dbReference>
<dbReference type="Pfam" id="PF00515">
    <property type="entry name" value="TPR_1"/>
    <property type="match status" value="1"/>
</dbReference>
<dbReference type="Pfam" id="PF13432">
    <property type="entry name" value="TPR_16"/>
    <property type="match status" value="1"/>
</dbReference>
<dbReference type="Pfam" id="PF13181">
    <property type="entry name" value="TPR_8"/>
    <property type="match status" value="1"/>
</dbReference>
<dbReference type="SMART" id="SM00028">
    <property type="entry name" value="TPR"/>
    <property type="match status" value="4"/>
</dbReference>
<dbReference type="SUPFAM" id="SSF48452">
    <property type="entry name" value="TPR-like"/>
    <property type="match status" value="1"/>
</dbReference>
<dbReference type="PROSITE" id="PS50005">
    <property type="entry name" value="TPR"/>
    <property type="match status" value="4"/>
</dbReference>
<dbReference type="PROSITE" id="PS50293">
    <property type="entry name" value="TPR_REGION"/>
    <property type="match status" value="1"/>
</dbReference>
<feature type="chain" id="PRO_0000461164" description="Peroxisomal targeting signal receptor">
    <location>
        <begin position="1"/>
        <end position="576"/>
    </location>
</feature>
<feature type="repeat" description="TPR 1" evidence="5">
    <location>
        <begin position="278"/>
        <end position="311"/>
    </location>
</feature>
<feature type="repeat" description="TPR 2" evidence="5">
    <location>
        <begin position="312"/>
        <end position="345"/>
    </location>
</feature>
<feature type="repeat" description="TPR 3" evidence="4">
    <location>
        <begin position="346"/>
        <end position="383"/>
    </location>
</feature>
<feature type="repeat" description="TPR 4" evidence="4">
    <location>
        <begin position="384"/>
        <end position="421"/>
    </location>
</feature>
<feature type="repeat" description="TPR 5" evidence="5">
    <location>
        <begin position="422"/>
        <end position="455"/>
    </location>
</feature>
<feature type="repeat" description="TPR 6" evidence="5">
    <location>
        <begin position="456"/>
        <end position="489"/>
    </location>
</feature>
<feature type="repeat" description="TPR 7" evidence="5">
    <location>
        <begin position="490"/>
        <end position="523"/>
    </location>
</feature>
<feature type="region of interest" description="Amphipathic helix 1 (AH1)" evidence="1">
    <location>
        <begin position="11"/>
        <end position="33"/>
    </location>
</feature>
<feature type="region of interest" description="Amphipathic helix 2 (AH2)" evidence="1">
    <location>
        <begin position="58"/>
        <end position="75"/>
    </location>
</feature>
<feature type="region of interest" description="Disordered" evidence="6">
    <location>
        <begin position="176"/>
        <end position="195"/>
    </location>
</feature>
<feature type="region of interest" description="Amphipathic helix 4 (AH4)" evidence="1">
    <location>
        <begin position="224"/>
        <end position="240"/>
    </location>
</feature>
<feature type="short sequence motif" description="WxxxF/Y motif 1" evidence="1">
    <location>
        <begin position="100"/>
        <end position="104"/>
    </location>
</feature>
<feature type="short sequence motif" description="WxxxF/Y motif 2" evidence="1">
    <location>
        <begin position="128"/>
        <end position="132"/>
    </location>
</feature>
<feature type="short sequence motif" description="WxxxF/Y motif 3" evidence="1">
    <location>
        <begin position="196"/>
        <end position="200"/>
    </location>
</feature>
<feature type="short sequence motif" description="WxxxF/Y motif 4" evidence="1">
    <location>
        <begin position="249"/>
        <end position="253"/>
    </location>
</feature>
<feature type="cross-link" description="Glycyl cysteine thioester (Cys-Gly) (interchain with G-Cter in ubiquitin)" evidence="2">
    <location>
        <position position="10"/>
    </location>
</feature>
<feature type="cross-link" description="Glycyl lysine isopeptide (Lys-Gly) (interchain with G-Cter in ubiquitin)" evidence="2">
    <location>
        <position position="22"/>
    </location>
</feature>
<feature type="mutagenesis site" description="Completely abolishes the formation of internal disulfide bond and leads to defects in importing peroxisomal PTS1 cargo." evidence="7">
    <original>C</original>
    <variation>S</variation>
    <location>
        <position position="10"/>
    </location>
</feature>
<feature type="mutagenesis site" description="Completely abolishes the formation of internal disulfide bond and leads to defects in importing peroxisomal PTS1 cargo; when associated with S-444." evidence="7">
    <original>C</original>
    <variation>S</variation>
    <location>
        <position position="338"/>
    </location>
</feature>
<feature type="mutagenesis site" description="Completely abolishes the formation of internal disulfide bond and leads to defects in importing peroxisomal PTS1 cargo; when associated with S-338." evidence="7">
    <original>C</original>
    <variation>S</variation>
    <location>
        <position position="444"/>
    </location>
</feature>
<name>PEX5_KOMPG</name>
<comment type="function">
    <text evidence="2 7 8 9 10">Receptor that mediates peroxisomal import of proteins containing a C-terminal PTS1-type tripeptide peroxisomal targeting signal (SKL-type) (PubMed:23902771, PubMed:7641682, PubMed:8098333). Binds to cargo proteins containing a PTS1 peroxisomal targeting signal in the cytosol, and translocates them into the peroxisome matrix by passing through the peroxisomal docking complex along with cargo proteins (PubMed:8098333). PEX5 receptor is then retrotranslocated into the cytosol, leading to release of bound cargo in the peroxisome matrix, and reset for a subsequent peroxisome import cycle (By similarity). Required for PEX7 ubiquitination (PubMed:25009284).</text>
</comment>
<comment type="subunit">
    <text evidence="2 7">Interacts (via WxxxF/Y and LVxEF motifs) with PEX14; promoting translocation through the PEX13-PEX14 docking complex (By similarity). Interacts with PEX8 (PubMed:23902771).</text>
</comment>
<comment type="subcellular location">
    <subcellularLocation>
        <location evidence="9">Peroxisome membrane</location>
        <topology evidence="9">Peripheral membrane protein</topology>
        <orientation evidence="9">Cytoplasmic side</orientation>
    </subcellularLocation>
    <subcellularLocation>
        <location evidence="2">Cytoplasm</location>
        <location evidence="2">Cytosol</location>
    </subcellularLocation>
    <subcellularLocation>
        <location evidence="2">Peroxisome matrix</location>
    </subcellularLocation>
    <text evidence="2 3">Cycles between the cytosol and the peroxisome matrix. Following binding to cargo proteins containing a PTS1 peroxisomal targeting signal in the cytosol, recruited to the docking complex, composed of PEX13 and PEX14, leading to translocation into the peroxisome matrix along with cargo proteins. Export and recycling to the cytosol is initiated by binding to the PEX2-PEX10-PEX12 ligase complex via its unstructured N-terminus that inserts into the ligase pore and emerges in the cytosol. Cys-10 of PEX5 is then monoubiquitinated, promoting its extraction from peroxisomal membrane by the PEX1-PEX6 AAA ATPase complex (By similarity). Extraction is accompanied by unfolding of the TPR repeats and release of bound cargo in the peroxisome matrix (By similarity). The TPR repeats refold in the cytosol and ubiquitination is removed by deubiquitinating enzyme UBP15, resetting PEX5 for a subsequent import cycle (By similarity).</text>
</comment>
<comment type="domain">
    <text evidence="9">The TPR repeats mediate interaction with proteins containing a C-terminal PTS1-type tripeptide peroxisomal targeting signal (SKL-type).</text>
</comment>
<comment type="domain">
    <text evidence="1">The WxxxF/Y motifs mediate interaction with PEX14, promoting association with the PEX13-PEX14 docking complex.</text>
</comment>
<comment type="domain">
    <text evidence="1">The amphipathic helix 1 and 2 (AH1 and AH2, respectively) are required for PEX5 retrotranslocation and recycling. AH2 mediates interaction with lumenal side of the PEX2-PEX10-PEX12 ligase complex, while AH1 is required for extraction from peroxisomal membrane by the PEX1-PEX6 AAA ATPase complex.</text>
</comment>
<comment type="domain">
    <text evidence="7">Binding of PEX8 to the N-terminus of PEX5 cargo receptor induces a conformational change of the TPR domains and decrease their binding affinity to cargo, facilitating the release of the PTS1 proteins within the peroxisome.</text>
</comment>
<comment type="PTM">
    <text evidence="7">A disulfide bond is created between Cys-10 and Cys-338 or Cys-444.</text>
</comment>
<comment type="PTM">
    <text evidence="2">Monoubiquitinated at Cys-10 by PEX2 during PEX5 passage through the retrotranslocation channel: monoubiquitination acts as a signal for PEX5 extraction and is required for proper export from peroxisomes and recycling. When PEX5 recycling is compromised, polyubiquitinated at Lys-22 by PEX10 during its passage through the retrotranslocation channel, leading to its degradation.</text>
</comment>
<comment type="disruption phenotype">
    <text evidence="10">Leads to deficiency in the import of proteins with the PTS1, but not the PTS2, targeting signal.</text>
</comment>
<comment type="similarity">
    <text evidence="11">Belongs to the peroxisomal targeting signal receptor family.</text>
</comment>
<keyword id="KW-0963">Cytoplasm</keyword>
<keyword id="KW-1015">Disulfide bond</keyword>
<keyword id="KW-1017">Isopeptide bond</keyword>
<keyword id="KW-0472">Membrane</keyword>
<keyword id="KW-0576">Peroxisome</keyword>
<keyword id="KW-0653">Protein transport</keyword>
<keyword id="KW-1185">Reference proteome</keyword>
<keyword id="KW-0677">Repeat</keyword>
<keyword id="KW-0882">Thioester bond</keyword>
<keyword id="KW-0802">TPR repeat</keyword>
<keyword id="KW-0811">Translocation</keyword>
<keyword id="KW-0813">Transport</keyword>
<keyword id="KW-0832">Ubl conjugation</keyword>
<evidence type="ECO:0000250" key="1">
    <source>
        <dbReference type="UniProtKB" id="A0A1L8FDW4"/>
    </source>
</evidence>
<evidence type="ECO:0000250" key="2">
    <source>
        <dbReference type="UniProtKB" id="P35056"/>
    </source>
</evidence>
<evidence type="ECO:0000250" key="3">
    <source>
        <dbReference type="UniProtKB" id="P50542"/>
    </source>
</evidence>
<evidence type="ECO:0000255" key="4"/>
<evidence type="ECO:0000255" key="5">
    <source>
        <dbReference type="PROSITE-ProRule" id="PRU00339"/>
    </source>
</evidence>
<evidence type="ECO:0000256" key="6">
    <source>
        <dbReference type="SAM" id="MobiDB-lite"/>
    </source>
</evidence>
<evidence type="ECO:0000269" key="7">
    <source>
    </source>
</evidence>
<evidence type="ECO:0000269" key="8">
    <source>
    </source>
</evidence>
<evidence type="ECO:0000269" key="9">
    <source>
    </source>
</evidence>
<evidence type="ECO:0000269" key="10">
    <source>
    </source>
</evidence>
<evidence type="ECO:0000305" key="11"/>
<evidence type="ECO:0000312" key="12">
    <source>
        <dbReference type="EMBL" id="CAY69734.1"/>
    </source>
</evidence>
<sequence length="576" mass="65083">MSLIGGGSDCAAGSNPLAQFTKHTQHDTSLQQSMRNGEFQQGNQRMMRNESTMSPMERQQMDQFMQQQNNPAFNFQPMQHELNVMQQNMNAPQQVANNSWNQEFRMKDPMVANAPSAQVQTPVQSTNWAQDFQQAGPEVQHHAQQHQHPILSVPGVRAGIYGGGRLMGGSMMNRAAQMQQQNPAQAQTSEQSQTQWEDQFKDIESMLNSKTQEPKTKQQEQNTFEQVWDDIQVSYADVELTNDQFQAQWEKDFAQYAEGRLNYGEYKYEEKNQFRNDPDAYEIGMRLMESGAKLSEAGLAFEAAVQQDPKHVDAWLKLGEVQTQNEKESDGIAALEKCLELDPTNLAALMTLAISYINDGYDNAAYATLERWIETKYPDIASRARSSNPDLDGGDRIEQNKRVTELFMKAAQLSPDVASMDADVQTGLGVLFYSMEEFDKTIDCFKAAIEVEPDKALNWNRLGAALANYNKPEEAVEAYSRALQLNPNFVRARYNLGVSFINMGRYKEAVEHLLTGISLHEVEGVDASEMSSNQGLQNNALVETLKRAFLGMNRRDLVDKVYPGMGLAQFRKMFDF</sequence>
<organism>
    <name type="scientific">Komagataella phaffii (strain GS115 / ATCC 20864)</name>
    <name type="common">Yeast</name>
    <name type="synonym">Pichia pastoris</name>
    <dbReference type="NCBI Taxonomy" id="644223"/>
    <lineage>
        <taxon>Eukaryota</taxon>
        <taxon>Fungi</taxon>
        <taxon>Dikarya</taxon>
        <taxon>Ascomycota</taxon>
        <taxon>Saccharomycotina</taxon>
        <taxon>Pichiomycetes</taxon>
        <taxon>Pichiales</taxon>
        <taxon>Pichiaceae</taxon>
        <taxon>Komagataella</taxon>
    </lineage>
</organism>
<protein>
    <recommendedName>
        <fullName evidence="11">Peroxisomal targeting signal receptor</fullName>
        <shortName>PTS1 receptor</shortName>
        <shortName>PTS1R</shortName>
    </recommendedName>
    <alternativeName>
        <fullName evidence="11">Peroxin-5</fullName>
    </alternativeName>
</protein>
<accession>C4R2L0</accession>
<gene>
    <name evidence="12" type="ordered locus">PAS_chr2-2_0186</name>
</gene>